<reference key="1">
    <citation type="journal article" date="2009" name="Chem. Biol.">
        <title>Cloning and heterologous expression of the cyclooctatin biosynthetic gene cluster afford a diterpene cyclase and two p450 hydroxylases.</title>
        <authorList>
            <person name="Kim S.Y."/>
            <person name="Zhao P."/>
            <person name="Igarashi M."/>
            <person name="Sawa R."/>
            <person name="Tomita T."/>
            <person name="Nishiyama M."/>
            <person name="Kuzuyama T."/>
        </authorList>
    </citation>
    <scope>NUCLEOTIDE SEQUENCE [GENOMIC DNA]</scope>
    <scope>CATALYTIC ACTIVITY</scope>
    <scope>FUNCTION</scope>
    <scope>SUBUNIT</scope>
    <source>
        <strain evidence="8">MI614-43F2</strain>
    </source>
</reference>
<reference key="2">
    <citation type="journal article" date="2014" name="Acta Crystallogr. D">
        <title>The first structure of a bacterial diterpene cyclase: CotB2.</title>
        <authorList>
            <person name="Janke R."/>
            <person name="Goerner C."/>
            <person name="Hirte M."/>
            <person name="Brueck T."/>
            <person name="Loll B."/>
        </authorList>
    </citation>
    <scope>X-RAY CRYSTALLOGRAPHY (1.64 ANGSTROMS)</scope>
    <scope>CATALYTIC ACTIVITY</scope>
    <scope>FUNCTION</scope>
    <scope>SUBUNIT</scope>
    <scope>MUTAGENESIS OF PHE-107; ASP-110; ASP-111; ASP-113; PHE-149 AND TRP-288</scope>
</reference>
<dbReference type="EC" id="4.2.3.146" evidence="3 4"/>
<dbReference type="EMBL" id="AB448947">
    <property type="protein sequence ID" value="BAI44338.1"/>
    <property type="molecule type" value="Genomic_DNA"/>
</dbReference>
<dbReference type="PDB" id="4OMG">
    <property type="method" value="X-ray"/>
    <property type="resolution" value="1.64 A"/>
    <property type="chains" value="A/B=1-307"/>
</dbReference>
<dbReference type="PDB" id="4OMH">
    <property type="method" value="X-ray"/>
    <property type="resolution" value="1.64 A"/>
    <property type="chains" value="A/B=1-307"/>
</dbReference>
<dbReference type="PDB" id="5GUC">
    <property type="method" value="X-ray"/>
    <property type="resolution" value="1.80 A"/>
    <property type="chains" value="A/B=1-307"/>
</dbReference>
<dbReference type="PDB" id="5GUE">
    <property type="method" value="X-ray"/>
    <property type="resolution" value="1.80 A"/>
    <property type="chains" value="A/B/C/D=1-307"/>
</dbReference>
<dbReference type="PDB" id="6GGI">
    <property type="method" value="X-ray"/>
    <property type="resolution" value="1.80 A"/>
    <property type="chains" value="A/B=1-307"/>
</dbReference>
<dbReference type="PDB" id="6GGJ">
    <property type="method" value="X-ray"/>
    <property type="resolution" value="2.10 A"/>
    <property type="chains" value="A/B=1-307"/>
</dbReference>
<dbReference type="PDB" id="6GGK">
    <property type="method" value="X-ray"/>
    <property type="resolution" value="2.15 A"/>
    <property type="chains" value="A/B=1-293"/>
</dbReference>
<dbReference type="PDB" id="6GGL">
    <property type="method" value="X-ray"/>
    <property type="resolution" value="1.90 A"/>
    <property type="chains" value="A/B=1-307"/>
</dbReference>
<dbReference type="PDB" id="7AO0">
    <property type="method" value="X-ray"/>
    <property type="resolution" value="1.93 A"/>
    <property type="chains" value="A/B=1-307"/>
</dbReference>
<dbReference type="PDB" id="7AO1">
    <property type="method" value="X-ray"/>
    <property type="resolution" value="1.80 A"/>
    <property type="chains" value="A/B=1-307"/>
</dbReference>
<dbReference type="PDB" id="7AO2">
    <property type="method" value="X-ray"/>
    <property type="resolution" value="1.75 A"/>
    <property type="chains" value="A/B=1-307"/>
</dbReference>
<dbReference type="PDB" id="7AO3">
    <property type="method" value="X-ray"/>
    <property type="resolution" value="1.45 A"/>
    <property type="chains" value="A/B=1-307"/>
</dbReference>
<dbReference type="PDB" id="7AO4">
    <property type="method" value="X-ray"/>
    <property type="resolution" value="2.20 A"/>
    <property type="chains" value="A/B=1-307"/>
</dbReference>
<dbReference type="PDB" id="7AO5">
    <property type="method" value="X-ray"/>
    <property type="resolution" value="2.06 A"/>
    <property type="chains" value="A/B=1-307"/>
</dbReference>
<dbReference type="PDB" id="8QWR">
    <property type="method" value="X-ray"/>
    <property type="resolution" value="1.70 A"/>
    <property type="chains" value="A/B=1-307"/>
</dbReference>
<dbReference type="PDB" id="8QWS">
    <property type="method" value="X-ray"/>
    <property type="resolution" value="1.60 A"/>
    <property type="chains" value="A/B=1-307"/>
</dbReference>
<dbReference type="PDBsum" id="4OMG"/>
<dbReference type="PDBsum" id="4OMH"/>
<dbReference type="PDBsum" id="5GUC"/>
<dbReference type="PDBsum" id="5GUE"/>
<dbReference type="PDBsum" id="6GGI"/>
<dbReference type="PDBsum" id="6GGJ"/>
<dbReference type="PDBsum" id="6GGK"/>
<dbReference type="PDBsum" id="6GGL"/>
<dbReference type="PDBsum" id="7AO0"/>
<dbReference type="PDBsum" id="7AO1"/>
<dbReference type="PDBsum" id="7AO2"/>
<dbReference type="PDBsum" id="7AO3"/>
<dbReference type="PDBsum" id="7AO4"/>
<dbReference type="PDBsum" id="7AO5"/>
<dbReference type="PDBsum" id="8QWR"/>
<dbReference type="PDBsum" id="8QWS"/>
<dbReference type="SMR" id="C9K1X5"/>
<dbReference type="KEGG" id="ag:BAI44338"/>
<dbReference type="BioCyc" id="MetaCyc:MONOMER-18586"/>
<dbReference type="BRENDA" id="4.2.3.146">
    <property type="organism ID" value="13958"/>
</dbReference>
<dbReference type="EvolutionaryTrace" id="C9K1X5"/>
<dbReference type="GO" id="GO:0016853">
    <property type="term" value="F:isomerase activity"/>
    <property type="evidence" value="ECO:0007669"/>
    <property type="project" value="UniProtKB-KW"/>
</dbReference>
<dbReference type="GO" id="GO:0016829">
    <property type="term" value="F:lyase activity"/>
    <property type="evidence" value="ECO:0007669"/>
    <property type="project" value="UniProtKB-KW"/>
</dbReference>
<dbReference type="GO" id="GO:0046872">
    <property type="term" value="F:metal ion binding"/>
    <property type="evidence" value="ECO:0007669"/>
    <property type="project" value="UniProtKB-KW"/>
</dbReference>
<dbReference type="Gene3D" id="1.10.600.10">
    <property type="entry name" value="Farnesyl Diphosphate Synthase"/>
    <property type="match status" value="1"/>
</dbReference>
<dbReference type="InterPro" id="IPR008949">
    <property type="entry name" value="Isoprenoid_synthase_dom_sf"/>
</dbReference>
<dbReference type="Pfam" id="PF19086">
    <property type="entry name" value="Terpene_syn_C_2"/>
    <property type="match status" value="1"/>
</dbReference>
<dbReference type="SUPFAM" id="SSF48576">
    <property type="entry name" value="Terpenoid synthases"/>
    <property type="match status" value="1"/>
</dbReference>
<keyword id="KW-0002">3D-structure</keyword>
<keyword id="KW-0413">Isomerase</keyword>
<keyword id="KW-0456">Lyase</keyword>
<keyword id="KW-0460">Magnesium</keyword>
<keyword id="KW-0479">Metal-binding</keyword>
<evidence type="ECO:0000250" key="1"/>
<evidence type="ECO:0000250" key="2">
    <source>
        <dbReference type="UniProtKB" id="Q40577"/>
    </source>
</evidence>
<evidence type="ECO:0000269" key="3">
    <source>
    </source>
</evidence>
<evidence type="ECO:0000269" key="4">
    <source>
    </source>
</evidence>
<evidence type="ECO:0000303" key="5">
    <source>
    </source>
</evidence>
<evidence type="ECO:0000303" key="6">
    <source>
    </source>
</evidence>
<evidence type="ECO:0000305" key="7"/>
<evidence type="ECO:0000312" key="8">
    <source>
        <dbReference type="EMBL" id="BAI44338.1"/>
    </source>
</evidence>
<evidence type="ECO:0007829" key="9">
    <source>
        <dbReference type="PDB" id="7AO3"/>
    </source>
</evidence>
<evidence type="ECO:0007829" key="10">
    <source>
        <dbReference type="PDB" id="8QWS"/>
    </source>
</evidence>
<organism evidence="8">
    <name type="scientific">Streptomyces melanosporofaciens</name>
    <dbReference type="NCBI Taxonomy" id="67327"/>
    <lineage>
        <taxon>Bacteria</taxon>
        <taxon>Bacillati</taxon>
        <taxon>Actinomycetota</taxon>
        <taxon>Actinomycetes</taxon>
        <taxon>Kitasatosporales</taxon>
        <taxon>Streptomycetaceae</taxon>
        <taxon>Streptomyces</taxon>
        <taxon>Streptomyces violaceusniger group</taxon>
    </lineage>
</organism>
<protein>
    <recommendedName>
        <fullName evidence="5">Cyclooctat-9-en-7-ol synthase</fullName>
        <ecNumber evidence="3 4">4.2.3.146</ecNumber>
    </recommendedName>
</protein>
<proteinExistence type="evidence at protein level"/>
<gene>
    <name evidence="5" type="primary">CotB2</name>
</gene>
<feature type="chain" id="PRO_0000430746" description="Cyclooctat-9-en-7-ol synthase">
    <location>
        <begin position="1"/>
        <end position="307"/>
    </location>
</feature>
<feature type="short sequence motif" description="DDXXD motif; degenerate">
    <location>
        <begin position="110"/>
        <end position="113"/>
    </location>
</feature>
<feature type="short sequence motif" description="NSE/DTE motif">
    <location>
        <begin position="220"/>
        <end position="228"/>
    </location>
</feature>
<feature type="binding site" evidence="2">
    <location>
        <position position="110"/>
    </location>
    <ligand>
        <name>Mg(2+)</name>
        <dbReference type="ChEBI" id="CHEBI:18420"/>
        <label>1</label>
    </ligand>
</feature>
<feature type="binding site" evidence="2">
    <location>
        <position position="110"/>
    </location>
    <ligand>
        <name>Mg(2+)</name>
        <dbReference type="ChEBI" id="CHEBI:18420"/>
        <label>2</label>
    </ligand>
</feature>
<feature type="binding site" evidence="2">
    <location>
        <position position="220"/>
    </location>
    <ligand>
        <name>Mg(2+)</name>
        <dbReference type="ChEBI" id="CHEBI:18420"/>
        <label>3</label>
    </ligand>
</feature>
<feature type="binding site" evidence="2">
    <location>
        <position position="224"/>
    </location>
    <ligand>
        <name>Mg(2+)</name>
        <dbReference type="ChEBI" id="CHEBI:18420"/>
        <label>3</label>
    </ligand>
</feature>
<feature type="binding site" evidence="2">
    <location>
        <position position="228"/>
    </location>
    <ligand>
        <name>Mg(2+)</name>
        <dbReference type="ChEBI" id="CHEBI:18420"/>
        <label>3</label>
    </ligand>
</feature>
<feature type="mutagenesis site" description="Produces R-cembrene-A." evidence="4">
    <original>F</original>
    <variation>A</variation>
    <variation>G</variation>
    <location>
        <position position="107"/>
    </location>
</feature>
<feature type="mutagenesis site" description="No change in product (cyclooctat-9-en-7-ol)." evidence="4">
    <original>D</original>
    <variation>E</variation>
    <location>
        <position position="110"/>
    </location>
</feature>
<feature type="mutagenesis site" description="Abolishes activity, no product." evidence="4">
    <original>D</original>
    <variation>E</variation>
    <location>
        <position position="111"/>
    </location>
</feature>
<feature type="mutagenesis site" description="No change in product (cyclooctat-9-en-7-ol)." evidence="4">
    <original>D</original>
    <variation>E</variation>
    <location>
        <position position="113"/>
    </location>
</feature>
<feature type="mutagenesis site" description="Produces cyclooctat-9-en-7-ol." evidence="6">
    <original>F</original>
    <variation>G</variation>
    <variation>H</variation>
    <variation>L</variation>
    <variation>V</variation>
    <location>
        <position position="149"/>
    </location>
</feature>
<feature type="mutagenesis site" description="Abolishes activity, no product." evidence="6">
    <original>F</original>
    <variation>Y</variation>
    <location>
        <position position="149"/>
    </location>
</feature>
<feature type="mutagenesis site" description="Produces 3,7,18-dolabellatriene." evidence="4">
    <original>W</original>
    <variation>G</variation>
    <location>
        <position position="288"/>
    </location>
</feature>
<feature type="helix" evidence="10">
    <location>
        <begin position="13"/>
        <end position="16"/>
    </location>
</feature>
<feature type="helix" evidence="9">
    <location>
        <begin position="19"/>
        <end position="21"/>
    </location>
</feature>
<feature type="helix" evidence="9">
    <location>
        <begin position="22"/>
        <end position="36"/>
    </location>
</feature>
<feature type="helix" evidence="9">
    <location>
        <begin position="48"/>
        <end position="62"/>
    </location>
</feature>
<feature type="helix" evidence="9">
    <location>
        <begin position="63"/>
        <end position="65"/>
    </location>
</feature>
<feature type="helix" evidence="9">
    <location>
        <begin position="71"/>
        <end position="84"/>
    </location>
</feature>
<feature type="turn" evidence="9">
    <location>
        <begin position="87"/>
        <end position="89"/>
    </location>
</feature>
<feature type="helix" evidence="9">
    <location>
        <begin position="93"/>
        <end position="111"/>
    </location>
</feature>
<feature type="helix" evidence="9">
    <location>
        <begin position="114"/>
        <end position="116"/>
    </location>
</feature>
<feature type="helix" evidence="9">
    <location>
        <begin position="119"/>
        <end position="133"/>
    </location>
</feature>
<feature type="helix" evidence="9">
    <location>
        <begin position="136"/>
        <end position="155"/>
    </location>
</feature>
<feature type="turn" evidence="9">
    <location>
        <begin position="156"/>
        <end position="158"/>
    </location>
</feature>
<feature type="helix" evidence="9">
    <location>
        <begin position="160"/>
        <end position="168"/>
    </location>
</feature>
<feature type="helix" evidence="9">
    <location>
        <begin position="170"/>
        <end position="180"/>
    </location>
</feature>
<feature type="helix" evidence="9">
    <location>
        <begin position="183"/>
        <end position="194"/>
    </location>
</feature>
<feature type="helix" evidence="9">
    <location>
        <begin position="197"/>
        <end position="205"/>
    </location>
</feature>
<feature type="helix" evidence="9">
    <location>
        <begin position="207"/>
        <end position="230"/>
    </location>
</feature>
<feature type="helix" evidence="9">
    <location>
        <begin position="237"/>
        <end position="240"/>
    </location>
</feature>
<feature type="helix" evidence="9">
    <location>
        <begin position="246"/>
        <end position="267"/>
    </location>
</feature>
<feature type="helix" evidence="9">
    <location>
        <begin position="272"/>
        <end position="291"/>
    </location>
</feature>
<feature type="helix" evidence="9">
    <location>
        <begin position="293"/>
        <end position="295"/>
    </location>
</feature>
<feature type="strand" evidence="9">
    <location>
        <begin position="297"/>
        <end position="299"/>
    </location>
</feature>
<feature type="turn" evidence="9">
    <location>
        <begin position="301"/>
        <end position="303"/>
    </location>
</feature>
<comment type="function">
    <text evidence="3 4">Catalyzes the cyclization of the linear isoprenoid intermediate geranylgeranyl diphosphate to tricycclic cyclooctat-9-en-7-ol in the cyclooctatin biosynthesis pathway. Cyclooctatin is a potent inhibitor of lysophospholipase.</text>
</comment>
<comment type="catalytic activity">
    <reaction evidence="3 4">
        <text>geranylgeranyl diphosphate + H2O = cyclooctat-9-en-7-ol + diphosphate</text>
        <dbReference type="Rhea" id="RHEA:41628"/>
        <dbReference type="ChEBI" id="CHEBI:15377"/>
        <dbReference type="ChEBI" id="CHEBI:33019"/>
        <dbReference type="ChEBI" id="CHEBI:57533"/>
        <dbReference type="ChEBI" id="CHEBI:78352"/>
        <dbReference type="EC" id="4.2.3.146"/>
    </reaction>
</comment>
<comment type="cofactor">
    <cofactor evidence="2">
        <name>Mg(2+)</name>
        <dbReference type="ChEBI" id="CHEBI:18420"/>
    </cofactor>
    <text evidence="2">Binds 3 Mg(2+) ions per subunit.</text>
</comment>
<comment type="subunit">
    <text evidence="5 6">Homodimer.</text>
</comment>
<comment type="domain">
    <text evidence="1">The Asp-Asp-Xaa-Xaa-Asp/Glu(DDXXD/E) motifs is important for the catalytic activity, presumably through binding to Mg(2+).</text>
</comment>
<comment type="miscellaneous">
    <text evidence="7">3,7,18-dolabellatriene produced by the Trp288Gly mutant has potential antibiotic activity against multidrug-resistant S.aureus (MRSA).</text>
</comment>
<comment type="similarity">
    <text evidence="7">Belongs to the terpene synthase family.</text>
</comment>
<name>COTB2_STRMJ</name>
<accession>C9K1X5</accession>
<sequence>MTTGLSTAGAQDIGRSSVRPYLEECTRRFQEMFDRHVVTRPTKVELTDAELREVIDDCNAAVAPLGKTVSDERWISYVGVVLWSQSPRHIKDMEAFKAVCVLNCVTFVWDDMDPALHDFGLFLPQLRKICEKYYGPEDAEVAYEAARAFVTSDHMFRDSPIKAALCTTSPEQYFRFRVTDIGVDFWMKMSYPIYRHPEFTEHAKTSLAARMTTRGLTIVNDFYSYDREVSLGQITNCFRLCDVSDETAFKEFFQARLDDMIEDIECIKAFDQLTQDVFLDLIYGNFVWTTSNKRYKTAVNDVNSRIQ</sequence>